<accession>B3ESF6</accession>
<proteinExistence type="inferred from homology"/>
<keyword id="KW-0963">Cytoplasm</keyword>
<keyword id="KW-0671">Queuosine biosynthesis</keyword>
<keyword id="KW-1185">Reference proteome</keyword>
<keyword id="KW-0949">S-adenosyl-L-methionine</keyword>
<keyword id="KW-0808">Transferase</keyword>
<evidence type="ECO:0000255" key="1">
    <source>
        <dbReference type="HAMAP-Rule" id="MF_00113"/>
    </source>
</evidence>
<comment type="function">
    <text evidence="1">Transfers and isomerizes the ribose moiety from AdoMet to the 7-aminomethyl group of 7-deazaguanine (preQ1-tRNA) to give epoxyqueuosine (oQ-tRNA).</text>
</comment>
<comment type="catalytic activity">
    <reaction evidence="1">
        <text>7-aminomethyl-7-carbaguanosine(34) in tRNA + S-adenosyl-L-methionine = epoxyqueuosine(34) in tRNA + adenine + L-methionine + 2 H(+)</text>
        <dbReference type="Rhea" id="RHEA:32155"/>
        <dbReference type="Rhea" id="RHEA-COMP:10342"/>
        <dbReference type="Rhea" id="RHEA-COMP:18582"/>
        <dbReference type="ChEBI" id="CHEBI:15378"/>
        <dbReference type="ChEBI" id="CHEBI:16708"/>
        <dbReference type="ChEBI" id="CHEBI:57844"/>
        <dbReference type="ChEBI" id="CHEBI:59789"/>
        <dbReference type="ChEBI" id="CHEBI:82833"/>
        <dbReference type="ChEBI" id="CHEBI:194443"/>
        <dbReference type="EC" id="2.4.99.17"/>
    </reaction>
</comment>
<comment type="pathway">
    <text evidence="1">tRNA modification; tRNA-queuosine biosynthesis.</text>
</comment>
<comment type="subunit">
    <text evidence="1">Monomer.</text>
</comment>
<comment type="subcellular location">
    <subcellularLocation>
        <location evidence="1">Cytoplasm</location>
    </subcellularLocation>
</comment>
<comment type="similarity">
    <text evidence="1">Belongs to the QueA family.</text>
</comment>
<organism>
    <name type="scientific">Amoebophilus asiaticus (strain 5a2)</name>
    <dbReference type="NCBI Taxonomy" id="452471"/>
    <lineage>
        <taxon>Bacteria</taxon>
        <taxon>Pseudomonadati</taxon>
        <taxon>Bacteroidota</taxon>
        <taxon>Cytophagia</taxon>
        <taxon>Cytophagales</taxon>
        <taxon>Amoebophilaceae</taxon>
        <taxon>Candidatus Amoebophilus</taxon>
    </lineage>
</organism>
<reference key="1">
    <citation type="journal article" date="2010" name="J. Bacteriol.">
        <title>The genome of the amoeba symbiont 'Candidatus Amoebophilus asiaticus' reveals common mechanisms for host cell interaction among amoeba-associated bacteria.</title>
        <authorList>
            <person name="Schmitz-Esser S."/>
            <person name="Tischler P."/>
            <person name="Arnold R."/>
            <person name="Montanaro J."/>
            <person name="Wagner M."/>
            <person name="Rattei T."/>
            <person name="Horn M."/>
        </authorList>
    </citation>
    <scope>NUCLEOTIDE SEQUENCE [LARGE SCALE GENOMIC DNA]</scope>
    <source>
        <strain>5a2</strain>
    </source>
</reference>
<protein>
    <recommendedName>
        <fullName evidence="1">S-adenosylmethionine:tRNA ribosyltransferase-isomerase</fullName>
        <ecNumber evidence="1">2.4.99.17</ecNumber>
    </recommendedName>
    <alternativeName>
        <fullName evidence="1">Queuosine biosynthesis protein QueA</fullName>
    </alternativeName>
</protein>
<gene>
    <name evidence="1" type="primary">queA</name>
    <name type="ordered locus">Aasi_0780</name>
</gene>
<sequence length="348" mass="39393">MKLSSFKFTLPSKLIASHPVENREDARLMVVHKRTGQIEHKTFKDLIDYLGENDTLVLNDAKIFPSKLYGSKEKTGAQIEVFLLRELESGEHLWDTLVEPARKIRVGNKLYFGDGELVAEVLDNTTSRGRTLKFLFEGTREEFYEIVDQLGFVPLPNQLKRKPETEDRERYQTVYAQHIGAVVPPFAGLHFSAHLLKRLELKGVHITPLTLHIGLNSMKIIDVEDLTKYRIGSEQFLIPDNTVTTVNTALDDKKQVCAVGTSTIKALETSVSVAGRLKPAQGWTNKLIFPPYDFKVCTSLITNFHLPESLPLVNAAAFGGYELMMEAYQIAIKEKYRFFVYGDAMLII</sequence>
<feature type="chain" id="PRO_1000117521" description="S-adenosylmethionine:tRNA ribosyltransferase-isomerase">
    <location>
        <begin position="1"/>
        <end position="348"/>
    </location>
</feature>
<name>QUEA_AMOA5</name>
<dbReference type="EC" id="2.4.99.17" evidence="1"/>
<dbReference type="EMBL" id="CP001102">
    <property type="protein sequence ID" value="ACE06158.1"/>
    <property type="molecule type" value="Genomic_DNA"/>
</dbReference>
<dbReference type="RefSeq" id="WP_012472927.1">
    <property type="nucleotide sequence ID" value="NC_010830.1"/>
</dbReference>
<dbReference type="SMR" id="B3ESF6"/>
<dbReference type="STRING" id="452471.Aasi_0780"/>
<dbReference type="KEGG" id="aas:Aasi_0780"/>
<dbReference type="eggNOG" id="COG0809">
    <property type="taxonomic scope" value="Bacteria"/>
</dbReference>
<dbReference type="HOGENOM" id="CLU_039110_1_0_10"/>
<dbReference type="OrthoDB" id="9805933at2"/>
<dbReference type="UniPathway" id="UPA00392"/>
<dbReference type="Proteomes" id="UP000001227">
    <property type="component" value="Chromosome"/>
</dbReference>
<dbReference type="GO" id="GO:0005737">
    <property type="term" value="C:cytoplasm"/>
    <property type="evidence" value="ECO:0007669"/>
    <property type="project" value="UniProtKB-SubCell"/>
</dbReference>
<dbReference type="GO" id="GO:0051075">
    <property type="term" value="F:S-adenosylmethionine:tRNA ribosyltransferase-isomerase activity"/>
    <property type="evidence" value="ECO:0007669"/>
    <property type="project" value="UniProtKB-EC"/>
</dbReference>
<dbReference type="GO" id="GO:0008616">
    <property type="term" value="P:queuosine biosynthetic process"/>
    <property type="evidence" value="ECO:0007669"/>
    <property type="project" value="UniProtKB-UniRule"/>
</dbReference>
<dbReference type="GO" id="GO:0002099">
    <property type="term" value="P:tRNA wobble guanine modification"/>
    <property type="evidence" value="ECO:0007669"/>
    <property type="project" value="TreeGrafter"/>
</dbReference>
<dbReference type="FunFam" id="2.40.10.240:FF:000002">
    <property type="entry name" value="S-adenosylmethionine:tRNA ribosyltransferase-isomerase"/>
    <property type="match status" value="1"/>
</dbReference>
<dbReference type="Gene3D" id="2.40.10.240">
    <property type="entry name" value="QueA-like"/>
    <property type="match status" value="1"/>
</dbReference>
<dbReference type="Gene3D" id="3.40.1780.10">
    <property type="entry name" value="QueA-like"/>
    <property type="match status" value="1"/>
</dbReference>
<dbReference type="HAMAP" id="MF_00113">
    <property type="entry name" value="QueA"/>
    <property type="match status" value="1"/>
</dbReference>
<dbReference type="InterPro" id="IPR003699">
    <property type="entry name" value="QueA"/>
</dbReference>
<dbReference type="InterPro" id="IPR042118">
    <property type="entry name" value="QueA_dom1"/>
</dbReference>
<dbReference type="InterPro" id="IPR042119">
    <property type="entry name" value="QueA_dom2"/>
</dbReference>
<dbReference type="InterPro" id="IPR036100">
    <property type="entry name" value="QueA_sf"/>
</dbReference>
<dbReference type="NCBIfam" id="NF001140">
    <property type="entry name" value="PRK00147.1"/>
    <property type="match status" value="1"/>
</dbReference>
<dbReference type="NCBIfam" id="TIGR00113">
    <property type="entry name" value="queA"/>
    <property type="match status" value="1"/>
</dbReference>
<dbReference type="PANTHER" id="PTHR30307">
    <property type="entry name" value="S-ADENOSYLMETHIONINE:TRNA RIBOSYLTRANSFERASE-ISOMERASE"/>
    <property type="match status" value="1"/>
</dbReference>
<dbReference type="PANTHER" id="PTHR30307:SF0">
    <property type="entry name" value="S-ADENOSYLMETHIONINE:TRNA RIBOSYLTRANSFERASE-ISOMERASE"/>
    <property type="match status" value="1"/>
</dbReference>
<dbReference type="Pfam" id="PF02547">
    <property type="entry name" value="Queuosine_synth"/>
    <property type="match status" value="1"/>
</dbReference>
<dbReference type="SUPFAM" id="SSF111337">
    <property type="entry name" value="QueA-like"/>
    <property type="match status" value="1"/>
</dbReference>